<name>SPT5_PYRFU</name>
<dbReference type="EMBL" id="AE009950">
    <property type="protein sequence ID" value="AAL82114.1"/>
    <property type="molecule type" value="Genomic_DNA"/>
</dbReference>
<dbReference type="RefSeq" id="WP_011013134.1">
    <property type="nucleotide sequence ID" value="NZ_CP023154.1"/>
</dbReference>
<dbReference type="PDB" id="3P8B">
    <property type="method" value="X-ray"/>
    <property type="resolution" value="1.80 A"/>
    <property type="chains" value="B/D=1-152"/>
</dbReference>
<dbReference type="PDB" id="3QQC">
    <property type="method" value="X-ray"/>
    <property type="resolution" value="3.30 A"/>
    <property type="chains" value="D=1-152"/>
</dbReference>
<dbReference type="PDB" id="8OKI">
    <property type="method" value="EM"/>
    <property type="resolution" value="3.45 A"/>
    <property type="chains" value="G=1-152"/>
</dbReference>
<dbReference type="PDB" id="8P2I">
    <property type="method" value="EM"/>
    <property type="resolution" value="3.40 A"/>
    <property type="chains" value="G=1-152"/>
</dbReference>
<dbReference type="PDBsum" id="3P8B"/>
<dbReference type="PDBsum" id="3QQC"/>
<dbReference type="PDBsum" id="8OKI"/>
<dbReference type="PDBsum" id="8P2I"/>
<dbReference type="EMDB" id="EMD-16929"/>
<dbReference type="EMDB" id="EMD-17366"/>
<dbReference type="SMR" id="Q8TZK1"/>
<dbReference type="DIP" id="DIP-59596N"/>
<dbReference type="IntAct" id="Q8TZK1">
    <property type="interactions" value="2"/>
</dbReference>
<dbReference type="MINT" id="Q8TZK1"/>
<dbReference type="STRING" id="186497.PF1990"/>
<dbReference type="PaxDb" id="186497-PF1990"/>
<dbReference type="KEGG" id="pfu:PF1990"/>
<dbReference type="PATRIC" id="fig|186497.12.peg.2066"/>
<dbReference type="eggNOG" id="arCOG01920">
    <property type="taxonomic scope" value="Archaea"/>
</dbReference>
<dbReference type="HOGENOM" id="CLU_113589_0_0_2"/>
<dbReference type="OrthoDB" id="371863at2157"/>
<dbReference type="PhylomeDB" id="Q8TZK1"/>
<dbReference type="EvolutionaryTrace" id="Q8TZK1"/>
<dbReference type="Proteomes" id="UP000001013">
    <property type="component" value="Chromosome"/>
</dbReference>
<dbReference type="GO" id="GO:0005840">
    <property type="term" value="C:ribosome"/>
    <property type="evidence" value="ECO:0007669"/>
    <property type="project" value="InterPro"/>
</dbReference>
<dbReference type="GO" id="GO:0003729">
    <property type="term" value="F:mRNA binding"/>
    <property type="evidence" value="ECO:0007669"/>
    <property type="project" value="TreeGrafter"/>
</dbReference>
<dbReference type="GO" id="GO:0003735">
    <property type="term" value="F:structural constituent of ribosome"/>
    <property type="evidence" value="ECO:0007669"/>
    <property type="project" value="InterPro"/>
</dbReference>
<dbReference type="GO" id="GO:0003746">
    <property type="term" value="F:translation elongation factor activity"/>
    <property type="evidence" value="ECO:0007669"/>
    <property type="project" value="InterPro"/>
</dbReference>
<dbReference type="GO" id="GO:0032784">
    <property type="term" value="P:regulation of DNA-templated transcription elongation"/>
    <property type="evidence" value="ECO:0007669"/>
    <property type="project" value="InterPro"/>
</dbReference>
<dbReference type="GO" id="GO:0006357">
    <property type="term" value="P:regulation of transcription by RNA polymerase II"/>
    <property type="evidence" value="ECO:0007669"/>
    <property type="project" value="InterPro"/>
</dbReference>
<dbReference type="GO" id="GO:0140673">
    <property type="term" value="P:transcription elongation-coupled chromatin remodeling"/>
    <property type="evidence" value="ECO:0007669"/>
    <property type="project" value="InterPro"/>
</dbReference>
<dbReference type="CDD" id="cd06091">
    <property type="entry name" value="KOW_NusG"/>
    <property type="match status" value="1"/>
</dbReference>
<dbReference type="CDD" id="cd09887">
    <property type="entry name" value="NGN_Arch"/>
    <property type="match status" value="1"/>
</dbReference>
<dbReference type="Gene3D" id="2.30.30.30">
    <property type="match status" value="1"/>
</dbReference>
<dbReference type="Gene3D" id="3.30.70.940">
    <property type="entry name" value="NusG, N-terminal domain"/>
    <property type="match status" value="1"/>
</dbReference>
<dbReference type="HAMAP" id="MF_00950">
    <property type="entry name" value="Spt5_arch"/>
    <property type="match status" value="1"/>
</dbReference>
<dbReference type="InterPro" id="IPR005824">
    <property type="entry name" value="KOW"/>
</dbReference>
<dbReference type="InterPro" id="IPR005100">
    <property type="entry name" value="NGN-domain"/>
</dbReference>
<dbReference type="InterPro" id="IPR006645">
    <property type="entry name" value="NGN-like_dom"/>
</dbReference>
<dbReference type="InterPro" id="IPR036735">
    <property type="entry name" value="NGN_dom_sf"/>
</dbReference>
<dbReference type="InterPro" id="IPR014722">
    <property type="entry name" value="Rib_uL2_dom2"/>
</dbReference>
<dbReference type="InterPro" id="IPR005825">
    <property type="entry name" value="Ribosomal_uL24_CS"/>
</dbReference>
<dbReference type="InterPro" id="IPR039659">
    <property type="entry name" value="SPT5"/>
</dbReference>
<dbReference type="InterPro" id="IPR011590">
    <property type="entry name" value="Spt5_arc"/>
</dbReference>
<dbReference type="InterPro" id="IPR008991">
    <property type="entry name" value="Translation_prot_SH3-like_sf"/>
</dbReference>
<dbReference type="NCBIfam" id="TIGR00405">
    <property type="entry name" value="KOW_elon_Spt5"/>
    <property type="match status" value="1"/>
</dbReference>
<dbReference type="PANTHER" id="PTHR11125">
    <property type="entry name" value="SUPPRESSOR OF TY 5"/>
    <property type="match status" value="1"/>
</dbReference>
<dbReference type="PANTHER" id="PTHR11125:SF7">
    <property type="entry name" value="TRANSCRIPTION ELONGATION FACTOR SPT5"/>
    <property type="match status" value="1"/>
</dbReference>
<dbReference type="Pfam" id="PF00467">
    <property type="entry name" value="KOW"/>
    <property type="match status" value="1"/>
</dbReference>
<dbReference type="Pfam" id="PF03439">
    <property type="entry name" value="Spt5-NGN"/>
    <property type="match status" value="1"/>
</dbReference>
<dbReference type="SMART" id="SM00739">
    <property type="entry name" value="KOW"/>
    <property type="match status" value="1"/>
</dbReference>
<dbReference type="SMART" id="SM00738">
    <property type="entry name" value="NGN"/>
    <property type="match status" value="1"/>
</dbReference>
<dbReference type="SUPFAM" id="SSF50104">
    <property type="entry name" value="Translation proteins SH3-like domain"/>
    <property type="match status" value="1"/>
</dbReference>
<evidence type="ECO:0000255" key="1">
    <source>
        <dbReference type="HAMAP-Rule" id="MF_00950"/>
    </source>
</evidence>
<evidence type="ECO:0000269" key="2">
    <source>
    </source>
</evidence>
<evidence type="ECO:0000269" key="3">
    <source>
    </source>
</evidence>
<evidence type="ECO:0007829" key="4">
    <source>
        <dbReference type="PDB" id="3P8B"/>
    </source>
</evidence>
<evidence type="ECO:0007829" key="5">
    <source>
        <dbReference type="PDB" id="8OKI"/>
    </source>
</evidence>
<comment type="function">
    <text evidence="1 2 3">Stimulates transcription elongation.</text>
</comment>
<comment type="subunit">
    <text evidence="1 2 3">Heterodimer composed of Spt4 and Spt5. Interacts with RNA polymerase (RNAP) independently of nucleic acids. Forms a homodimer in solution.</text>
</comment>
<comment type="interaction">
    <interactant intactId="EBI-8606402">
        <id>Q8TZK1</id>
    </interactant>
    <interactant intactId="EBI-8606370">
        <id>Q8U440</id>
        <label>spt4</label>
    </interactant>
    <organismsDiffer>false</organismsDiffer>
    <experiments>3</experiments>
</comment>
<comment type="domain">
    <text evidence="2 3">Composed of only a NusG N-terminal (NGN) domain and a KOW domain, similar to bacterial NusG. The NGN domain is the effector domain of the complex that mediates the interaction with RNAP. The NGN domain closes the RNAP active center cleft to lock nucleic acids and render the elongation complex stable and processive. The KOW domain may interact with RNA and/or other factors.</text>
</comment>
<comment type="similarity">
    <text evidence="1">Belongs to the archaeal Spt5 family.</text>
</comment>
<proteinExistence type="evidence at protein level"/>
<reference key="1">
    <citation type="journal article" date="1999" name="Genetics">
        <title>Divergence of the hyperthermophilic archaea Pyrococcus furiosus and P. horikoshii inferred from complete genomic sequences.</title>
        <authorList>
            <person name="Maeder D.L."/>
            <person name="Weiss R.B."/>
            <person name="Dunn D.M."/>
            <person name="Cherry J.L."/>
            <person name="Gonzalez J.M."/>
            <person name="DiRuggiero J."/>
            <person name="Robb F.T."/>
        </authorList>
    </citation>
    <scope>NUCLEOTIDE SEQUENCE [LARGE SCALE GENOMIC DNA]</scope>
    <source>
        <strain>ATCC 43587 / DSM 3638 / JCM 8422 / Vc1</strain>
    </source>
</reference>
<reference key="2">
    <citation type="journal article" date="2011" name="EMBO J.">
        <title>Architecture of the RNA polymerase-Spt4/5 complex and basis of universal transcription processivity.</title>
        <authorList>
            <person name="Martinez-Rucobo F.W."/>
            <person name="Sainsbury S."/>
            <person name="Cheung A.C."/>
            <person name="Cramer P."/>
        </authorList>
    </citation>
    <scope>X-RAY CRYSTALLOGRAPHY (3.30 ANGSTROMS) IN COMPLEX WITH SPT4 AND RNAP</scope>
    <scope>FUNCTION</scope>
    <scope>SUBUNIT</scope>
    <scope>DOMAIN</scope>
</reference>
<reference key="3">
    <citation type="journal article" date="2011" name="Proc. Natl. Acad. Sci. U.S.A.">
        <title>RNA polymerase and transcription elongation factor Spt4/5 complex structure.</title>
        <authorList>
            <person name="Klein B.J."/>
            <person name="Bose D."/>
            <person name="Baker K.J."/>
            <person name="Yusoff Z.M."/>
            <person name="Zhang X."/>
            <person name="Murakami K.S."/>
        </authorList>
    </citation>
    <scope>X-RAY CRYSTALLOGRAPHY (1.80 ANGSTROMS) IN COMPLEX WITH SPT4</scope>
    <scope>FUNCTION</scope>
    <scope>SUBUNIT</scope>
    <scope>DOMAIN</scope>
</reference>
<organism>
    <name type="scientific">Pyrococcus furiosus (strain ATCC 43587 / DSM 3638 / JCM 8422 / Vc1)</name>
    <dbReference type="NCBI Taxonomy" id="186497"/>
    <lineage>
        <taxon>Archaea</taxon>
        <taxon>Methanobacteriati</taxon>
        <taxon>Methanobacteriota</taxon>
        <taxon>Thermococci</taxon>
        <taxon>Thermococcales</taxon>
        <taxon>Thermococcaceae</taxon>
        <taxon>Pyrococcus</taxon>
    </lineage>
</organism>
<accession>Q8TZK1</accession>
<keyword id="KW-0002">3D-structure</keyword>
<keyword id="KW-1185">Reference proteome</keyword>
<keyword id="KW-0804">Transcription</keyword>
<keyword id="KW-0805">Transcription regulation</keyword>
<sequence length="152" mass="16792">MAGKIFAVRVTHGQEETTAKLIYSKVRTYNLPIYAILAPSRVKGYIFVEAPNKGVVDEAIRGIRHARGVLPGEVPFKEIEHFLEEKPAVSGLEPGDLVEVIAGPFKGQKAKVVKIDESKDEVVVQFIDAIVPIPVTIKGDYVRLISKLQKEE</sequence>
<gene>
    <name evidence="1" type="primary">spt5</name>
    <name type="ordered locus">PF1990</name>
</gene>
<protein>
    <recommendedName>
        <fullName evidence="1">Transcription elongation factor Spt5</fullName>
    </recommendedName>
</protein>
<feature type="chain" id="PRO_0000422136" description="Transcription elongation factor Spt5">
    <location>
        <begin position="1"/>
        <end position="152"/>
    </location>
</feature>
<feature type="domain" description="KOW" evidence="1">
    <location>
        <begin position="94"/>
        <end position="124"/>
    </location>
</feature>
<feature type="strand" evidence="4">
    <location>
        <begin position="4"/>
        <end position="10"/>
    </location>
</feature>
<feature type="helix" evidence="4">
    <location>
        <begin position="15"/>
        <end position="29"/>
    </location>
</feature>
<feature type="strand" evidence="4">
    <location>
        <begin position="35"/>
        <end position="38"/>
    </location>
</feature>
<feature type="strand" evidence="5">
    <location>
        <begin position="40"/>
        <end position="42"/>
    </location>
</feature>
<feature type="strand" evidence="4">
    <location>
        <begin position="44"/>
        <end position="52"/>
    </location>
</feature>
<feature type="helix" evidence="4">
    <location>
        <begin position="53"/>
        <end position="60"/>
    </location>
</feature>
<feature type="strand" evidence="4">
    <location>
        <begin position="66"/>
        <end position="69"/>
    </location>
</feature>
<feature type="helix" evidence="4">
    <location>
        <begin position="76"/>
        <end position="78"/>
    </location>
</feature>
<feature type="helix" evidence="4">
    <location>
        <begin position="80"/>
        <end position="82"/>
    </location>
</feature>
<feature type="turn" evidence="4">
    <location>
        <begin position="88"/>
        <end position="91"/>
    </location>
</feature>
<feature type="strand" evidence="4">
    <location>
        <begin position="97"/>
        <end position="100"/>
    </location>
</feature>
<feature type="turn" evidence="4">
    <location>
        <begin position="104"/>
        <end position="107"/>
    </location>
</feature>
<feature type="strand" evidence="4">
    <location>
        <begin position="109"/>
        <end position="116"/>
    </location>
</feature>
<feature type="turn" evidence="4">
    <location>
        <begin position="117"/>
        <end position="120"/>
    </location>
</feature>
<feature type="strand" evidence="4">
    <location>
        <begin position="121"/>
        <end position="128"/>
    </location>
</feature>
<feature type="strand" evidence="4">
    <location>
        <begin position="134"/>
        <end position="138"/>
    </location>
</feature>
<feature type="helix" evidence="4">
    <location>
        <begin position="139"/>
        <end position="141"/>
    </location>
</feature>
<feature type="strand" evidence="4">
    <location>
        <begin position="142"/>
        <end position="146"/>
    </location>
</feature>